<keyword id="KW-0963">Cytoplasm</keyword>
<keyword id="KW-0255">Endonuclease</keyword>
<keyword id="KW-0378">Hydrolase</keyword>
<keyword id="KW-0479">Metal-binding</keyword>
<keyword id="KW-0540">Nuclease</keyword>
<keyword id="KW-1185">Reference proteome</keyword>
<keyword id="KW-0690">Ribosome biogenesis</keyword>
<keyword id="KW-0698">rRNA processing</keyword>
<keyword id="KW-0862">Zinc</keyword>
<accession>Q831T7</accession>
<sequence length="159" mass="18178">MDITFIDETEKVPTEEIKEIENLLQFAAGFLEIAEDTEMSVTFTDNAGIQMINRDYRGKDMPTDVISFALEDEGEDELPIIFDDEELAELPRNLGDLIISTERAAEQAVEYGHTLEREMGFLAVHGFLHLNGYDHMEPEDEKEMFGLQKEILDAYGLKR</sequence>
<reference key="1">
    <citation type="journal article" date="2003" name="Science">
        <title>Role of mobile DNA in the evolution of vancomycin-resistant Enterococcus faecalis.</title>
        <authorList>
            <person name="Paulsen I.T."/>
            <person name="Banerjei L."/>
            <person name="Myers G.S.A."/>
            <person name="Nelson K.E."/>
            <person name="Seshadri R."/>
            <person name="Read T.D."/>
            <person name="Fouts D.E."/>
            <person name="Eisen J.A."/>
            <person name="Gill S.R."/>
            <person name="Heidelberg J.F."/>
            <person name="Tettelin H."/>
            <person name="Dodson R.J."/>
            <person name="Umayam L.A."/>
            <person name="Brinkac L.M."/>
            <person name="Beanan M.J."/>
            <person name="Daugherty S.C."/>
            <person name="DeBoy R.T."/>
            <person name="Durkin S.A."/>
            <person name="Kolonay J.F."/>
            <person name="Madupu R."/>
            <person name="Nelson W.C."/>
            <person name="Vamathevan J.J."/>
            <person name="Tran B."/>
            <person name="Upton J."/>
            <person name="Hansen T."/>
            <person name="Shetty J."/>
            <person name="Khouri H.M."/>
            <person name="Utterback T.R."/>
            <person name="Radune D."/>
            <person name="Ketchum K.A."/>
            <person name="Dougherty B.A."/>
            <person name="Fraser C.M."/>
        </authorList>
    </citation>
    <scope>NUCLEOTIDE SEQUENCE [LARGE SCALE GENOMIC DNA]</scope>
    <source>
        <strain>ATCC 700802 / V583</strain>
    </source>
</reference>
<evidence type="ECO:0000255" key="1">
    <source>
        <dbReference type="HAMAP-Rule" id="MF_00009"/>
    </source>
</evidence>
<name>YBEY_ENTFA</name>
<feature type="chain" id="PRO_0000102454" description="Endoribonuclease YbeY">
    <location>
        <begin position="1"/>
        <end position="159"/>
    </location>
</feature>
<feature type="binding site" evidence="1">
    <location>
        <position position="125"/>
    </location>
    <ligand>
        <name>Zn(2+)</name>
        <dbReference type="ChEBI" id="CHEBI:29105"/>
        <note>catalytic</note>
    </ligand>
</feature>
<feature type="binding site" evidence="1">
    <location>
        <position position="129"/>
    </location>
    <ligand>
        <name>Zn(2+)</name>
        <dbReference type="ChEBI" id="CHEBI:29105"/>
        <note>catalytic</note>
    </ligand>
</feature>
<feature type="binding site" evidence="1">
    <location>
        <position position="135"/>
    </location>
    <ligand>
        <name>Zn(2+)</name>
        <dbReference type="ChEBI" id="CHEBI:29105"/>
        <note>catalytic</note>
    </ligand>
</feature>
<comment type="function">
    <text evidence="1">Single strand-specific metallo-endoribonuclease involved in late-stage 70S ribosome quality control and in maturation of the 3' terminus of the 16S rRNA.</text>
</comment>
<comment type="cofactor">
    <cofactor evidence="1">
        <name>Zn(2+)</name>
        <dbReference type="ChEBI" id="CHEBI:29105"/>
    </cofactor>
    <text evidence="1">Binds 1 zinc ion.</text>
</comment>
<comment type="subcellular location">
    <subcellularLocation>
        <location evidence="1">Cytoplasm</location>
    </subcellularLocation>
</comment>
<comment type="similarity">
    <text evidence="1">Belongs to the endoribonuclease YbeY family.</text>
</comment>
<organism>
    <name type="scientific">Enterococcus faecalis (strain ATCC 700802 / V583)</name>
    <dbReference type="NCBI Taxonomy" id="226185"/>
    <lineage>
        <taxon>Bacteria</taxon>
        <taxon>Bacillati</taxon>
        <taxon>Bacillota</taxon>
        <taxon>Bacilli</taxon>
        <taxon>Lactobacillales</taxon>
        <taxon>Enterococcaceae</taxon>
        <taxon>Enterococcus</taxon>
    </lineage>
</organism>
<gene>
    <name evidence="1" type="primary">ybeY</name>
    <name type="ordered locus">EF_2412</name>
</gene>
<dbReference type="EC" id="3.1.-.-" evidence="1"/>
<dbReference type="EMBL" id="AE016830">
    <property type="protein sequence ID" value="AAO82131.1"/>
    <property type="molecule type" value="Genomic_DNA"/>
</dbReference>
<dbReference type="RefSeq" id="NP_816061.1">
    <property type="nucleotide sequence ID" value="NC_004668.1"/>
</dbReference>
<dbReference type="RefSeq" id="WP_002387079.1">
    <property type="nucleotide sequence ID" value="NZ_KE136528.1"/>
</dbReference>
<dbReference type="SMR" id="Q831T7"/>
<dbReference type="STRING" id="226185.EF_2412"/>
<dbReference type="EnsemblBacteria" id="AAO82131">
    <property type="protein sequence ID" value="AAO82131"/>
    <property type="gene ID" value="EF_2412"/>
</dbReference>
<dbReference type="KEGG" id="efa:EF2412"/>
<dbReference type="PATRIC" id="fig|226185.45.peg.1132"/>
<dbReference type="eggNOG" id="COG0319">
    <property type="taxonomic scope" value="Bacteria"/>
</dbReference>
<dbReference type="HOGENOM" id="CLU_106710_3_0_9"/>
<dbReference type="Proteomes" id="UP000001415">
    <property type="component" value="Chromosome"/>
</dbReference>
<dbReference type="GO" id="GO:0005737">
    <property type="term" value="C:cytoplasm"/>
    <property type="evidence" value="ECO:0007669"/>
    <property type="project" value="UniProtKB-SubCell"/>
</dbReference>
<dbReference type="GO" id="GO:0004222">
    <property type="term" value="F:metalloendopeptidase activity"/>
    <property type="evidence" value="ECO:0007669"/>
    <property type="project" value="InterPro"/>
</dbReference>
<dbReference type="GO" id="GO:0004521">
    <property type="term" value="F:RNA endonuclease activity"/>
    <property type="evidence" value="ECO:0007669"/>
    <property type="project" value="UniProtKB-UniRule"/>
</dbReference>
<dbReference type="GO" id="GO:0008270">
    <property type="term" value="F:zinc ion binding"/>
    <property type="evidence" value="ECO:0007669"/>
    <property type="project" value="UniProtKB-UniRule"/>
</dbReference>
<dbReference type="GO" id="GO:0006364">
    <property type="term" value="P:rRNA processing"/>
    <property type="evidence" value="ECO:0007669"/>
    <property type="project" value="UniProtKB-UniRule"/>
</dbReference>
<dbReference type="Gene3D" id="3.40.390.30">
    <property type="entry name" value="Metalloproteases ('zincins'), catalytic domain"/>
    <property type="match status" value="1"/>
</dbReference>
<dbReference type="HAMAP" id="MF_00009">
    <property type="entry name" value="Endoribonucl_YbeY"/>
    <property type="match status" value="1"/>
</dbReference>
<dbReference type="InterPro" id="IPR023091">
    <property type="entry name" value="MetalPrtase_cat_dom_sf_prd"/>
</dbReference>
<dbReference type="InterPro" id="IPR002036">
    <property type="entry name" value="YbeY"/>
</dbReference>
<dbReference type="InterPro" id="IPR020549">
    <property type="entry name" value="YbeY_CS"/>
</dbReference>
<dbReference type="NCBIfam" id="TIGR00043">
    <property type="entry name" value="rRNA maturation RNase YbeY"/>
    <property type="match status" value="1"/>
</dbReference>
<dbReference type="PANTHER" id="PTHR46986">
    <property type="entry name" value="ENDORIBONUCLEASE YBEY, CHLOROPLASTIC"/>
    <property type="match status" value="1"/>
</dbReference>
<dbReference type="PANTHER" id="PTHR46986:SF1">
    <property type="entry name" value="ENDORIBONUCLEASE YBEY, CHLOROPLASTIC"/>
    <property type="match status" value="1"/>
</dbReference>
<dbReference type="Pfam" id="PF02130">
    <property type="entry name" value="YbeY"/>
    <property type="match status" value="1"/>
</dbReference>
<dbReference type="SUPFAM" id="SSF55486">
    <property type="entry name" value="Metalloproteases ('zincins'), catalytic domain"/>
    <property type="match status" value="1"/>
</dbReference>
<dbReference type="PROSITE" id="PS01306">
    <property type="entry name" value="UPF0054"/>
    <property type="match status" value="1"/>
</dbReference>
<protein>
    <recommendedName>
        <fullName evidence="1">Endoribonuclease YbeY</fullName>
        <ecNumber evidence="1">3.1.-.-</ecNumber>
    </recommendedName>
</protein>
<proteinExistence type="inferred from homology"/>